<feature type="chain" id="PRO_1000068824" description="Guanosine-5'-triphosphate,3'-diphosphate pyrophosphatase">
    <location>
        <begin position="1"/>
        <end position="498"/>
    </location>
</feature>
<proteinExistence type="inferred from homology"/>
<keyword id="KW-0378">Hydrolase</keyword>
<organism>
    <name type="scientific">Serratia proteamaculans (strain 568)</name>
    <dbReference type="NCBI Taxonomy" id="399741"/>
    <lineage>
        <taxon>Bacteria</taxon>
        <taxon>Pseudomonadati</taxon>
        <taxon>Pseudomonadota</taxon>
        <taxon>Gammaproteobacteria</taxon>
        <taxon>Enterobacterales</taxon>
        <taxon>Yersiniaceae</taxon>
        <taxon>Serratia</taxon>
    </lineage>
</organism>
<sequence length="498" mass="55773">MLSSSALYAAIDLGSNSFHMLVVREVAGSIQTLARIKRKVRLAAGLDQNNLLSHEAMQRGWQCLKLFSERLQDIPRAQIRVVATATLRLASNADEFLQTAEQILGCPIQVISGEEEARLIYHGVAHTTGGPDQRLVVDIGGGSTELVTGTGAQAAQLYSLSMGCVTWLERFFSDRNLGQENFERAEQAAREMVRPIAPQLRQHGWQVCVGASGTVQALQEIMVAQGMDERITLSKLRQLKQRAIQCGKLEELEIEGLTLERALVFPSGLSILLAIFQELGIESMMLAGGALREGLVYGMLHLPVEQDIRSRTIRNLQRRYLLDTEQAERVSQLAANFSQQVSNEWQLDARCRELLHSACLIHEIGLSVDFKQAPQHAAYLIRHLDLPGFTPAQKKLLATLLQNQSNTIDLPLLSQQNALPPRTAQRLCRILRLAIIFASRRRDDTLPAVRLRANNDDELTVILPPGWLEQHPLRAEALDQESHWQSYVHWPLILEEQR</sequence>
<reference key="1">
    <citation type="submission" date="2007-09" db="EMBL/GenBank/DDBJ databases">
        <title>Complete sequence of chromosome of Serratia proteamaculans 568.</title>
        <authorList>
            <consortium name="US DOE Joint Genome Institute"/>
            <person name="Copeland A."/>
            <person name="Lucas S."/>
            <person name="Lapidus A."/>
            <person name="Barry K."/>
            <person name="Glavina del Rio T."/>
            <person name="Dalin E."/>
            <person name="Tice H."/>
            <person name="Pitluck S."/>
            <person name="Chain P."/>
            <person name="Malfatti S."/>
            <person name="Shin M."/>
            <person name="Vergez L."/>
            <person name="Schmutz J."/>
            <person name="Larimer F."/>
            <person name="Land M."/>
            <person name="Hauser L."/>
            <person name="Kyrpides N."/>
            <person name="Kim E."/>
            <person name="Taghavi S."/>
            <person name="Newman L."/>
            <person name="Vangronsveld J."/>
            <person name="van der Lelie D."/>
            <person name="Richardson P."/>
        </authorList>
    </citation>
    <scope>NUCLEOTIDE SEQUENCE [LARGE SCALE GENOMIC DNA]</scope>
    <source>
        <strain>568</strain>
    </source>
</reference>
<gene>
    <name evidence="1" type="primary">gppA</name>
    <name type="ordered locus">Spro_0157</name>
</gene>
<accession>A8G827</accession>
<evidence type="ECO:0000255" key="1">
    <source>
        <dbReference type="HAMAP-Rule" id="MF_01550"/>
    </source>
</evidence>
<dbReference type="EC" id="3.6.1.40" evidence="1"/>
<dbReference type="EMBL" id="CP000826">
    <property type="protein sequence ID" value="ABV39267.1"/>
    <property type="molecule type" value="Genomic_DNA"/>
</dbReference>
<dbReference type="SMR" id="A8G827"/>
<dbReference type="STRING" id="399741.Spro_0157"/>
<dbReference type="KEGG" id="spe:Spro_0157"/>
<dbReference type="eggNOG" id="COG0248">
    <property type="taxonomic scope" value="Bacteria"/>
</dbReference>
<dbReference type="HOGENOM" id="CLU_025908_4_0_6"/>
<dbReference type="OrthoDB" id="9793035at2"/>
<dbReference type="UniPathway" id="UPA00908">
    <property type="reaction ID" value="UER00885"/>
</dbReference>
<dbReference type="GO" id="GO:0004309">
    <property type="term" value="F:exopolyphosphatase activity"/>
    <property type="evidence" value="ECO:0007669"/>
    <property type="project" value="InterPro"/>
</dbReference>
<dbReference type="GO" id="GO:0008894">
    <property type="term" value="F:guanosine-5'-triphosphate,3'-diphosphate diphosphatase activity"/>
    <property type="evidence" value="ECO:0007669"/>
    <property type="project" value="UniProtKB-UniRule"/>
</dbReference>
<dbReference type="GO" id="GO:0015974">
    <property type="term" value="P:guanosine pentaphosphate catabolic process"/>
    <property type="evidence" value="ECO:0007669"/>
    <property type="project" value="InterPro"/>
</dbReference>
<dbReference type="GO" id="GO:0015970">
    <property type="term" value="P:guanosine tetraphosphate biosynthetic process"/>
    <property type="evidence" value="ECO:0007669"/>
    <property type="project" value="UniProtKB-UniRule"/>
</dbReference>
<dbReference type="GO" id="GO:0015949">
    <property type="term" value="P:nucleobase-containing small molecule interconversion"/>
    <property type="evidence" value="ECO:0007669"/>
    <property type="project" value="TreeGrafter"/>
</dbReference>
<dbReference type="CDD" id="cd24117">
    <property type="entry name" value="ASKHA_NBD_EcGppA-like"/>
    <property type="match status" value="1"/>
</dbReference>
<dbReference type="FunFam" id="1.10.3210.10:FF:000004">
    <property type="entry name" value="Guanosine-5'-triphosphate,3'-diphosphate pyrophosphatase"/>
    <property type="match status" value="1"/>
</dbReference>
<dbReference type="FunFam" id="3.30.420.150:FF:000001">
    <property type="entry name" value="Guanosine-5'-triphosphate,3'-diphosphate pyrophosphatase"/>
    <property type="match status" value="1"/>
</dbReference>
<dbReference type="FunFam" id="3.30.420.40:FF:000023">
    <property type="entry name" value="Guanosine-5'-triphosphate,3'-diphosphate pyrophosphatase"/>
    <property type="match status" value="1"/>
</dbReference>
<dbReference type="Gene3D" id="3.30.420.40">
    <property type="match status" value="1"/>
</dbReference>
<dbReference type="Gene3D" id="3.30.420.150">
    <property type="entry name" value="Exopolyphosphatase. Domain 2"/>
    <property type="match status" value="1"/>
</dbReference>
<dbReference type="Gene3D" id="1.10.3210.10">
    <property type="entry name" value="Hypothetical protein af1432"/>
    <property type="match status" value="1"/>
</dbReference>
<dbReference type="HAMAP" id="MF_01550">
    <property type="entry name" value="GppA"/>
    <property type="match status" value="1"/>
</dbReference>
<dbReference type="InterPro" id="IPR043129">
    <property type="entry name" value="ATPase_NBD"/>
</dbReference>
<dbReference type="InterPro" id="IPR022371">
    <property type="entry name" value="Exopolyphosphatase"/>
</dbReference>
<dbReference type="InterPro" id="IPR050273">
    <property type="entry name" value="GppA/Ppx_hydrolase"/>
</dbReference>
<dbReference type="InterPro" id="IPR023709">
    <property type="entry name" value="Guo-5TP_3DP_PyrP"/>
</dbReference>
<dbReference type="InterPro" id="IPR048950">
    <property type="entry name" value="Ppx_GppA_C"/>
</dbReference>
<dbReference type="InterPro" id="IPR003695">
    <property type="entry name" value="Ppx_GppA_N"/>
</dbReference>
<dbReference type="InterPro" id="IPR030673">
    <property type="entry name" value="PyroPPase_GppA_Ppx"/>
</dbReference>
<dbReference type="NCBIfam" id="TIGR03706">
    <property type="entry name" value="exo_poly_only"/>
    <property type="match status" value="1"/>
</dbReference>
<dbReference type="NCBIfam" id="NF008260">
    <property type="entry name" value="PRK11031.1"/>
    <property type="match status" value="1"/>
</dbReference>
<dbReference type="PANTHER" id="PTHR30005">
    <property type="entry name" value="EXOPOLYPHOSPHATASE"/>
    <property type="match status" value="1"/>
</dbReference>
<dbReference type="PANTHER" id="PTHR30005:SF0">
    <property type="entry name" value="RETROGRADE REGULATION PROTEIN 2"/>
    <property type="match status" value="1"/>
</dbReference>
<dbReference type="Pfam" id="PF02541">
    <property type="entry name" value="Ppx-GppA"/>
    <property type="match status" value="1"/>
</dbReference>
<dbReference type="Pfam" id="PF21447">
    <property type="entry name" value="Ppx-GppA_III"/>
    <property type="match status" value="1"/>
</dbReference>
<dbReference type="PIRSF" id="PIRSF001267">
    <property type="entry name" value="Pyrophosphatase_GppA_Ppx"/>
    <property type="match status" value="1"/>
</dbReference>
<dbReference type="SUPFAM" id="SSF53067">
    <property type="entry name" value="Actin-like ATPase domain"/>
    <property type="match status" value="2"/>
</dbReference>
<dbReference type="SUPFAM" id="SSF109604">
    <property type="entry name" value="HD-domain/PDEase-like"/>
    <property type="match status" value="1"/>
</dbReference>
<comment type="function">
    <text evidence="1">Catalyzes the conversion of pppGpp to ppGpp. Guanosine pentaphosphate (pppGpp) is a cytoplasmic signaling molecule which together with ppGpp controls the 'stringent response', an adaptive process that allows bacteria to respond to amino acid starvation, resulting in the coordinated regulation of numerous cellular activities.</text>
</comment>
<comment type="catalytic activity">
    <reaction evidence="1">
        <text>guanosine 3'-diphosphate 5'-triphosphate + H2O = guanosine 3',5'-bis(diphosphate) + phosphate + H(+)</text>
        <dbReference type="Rhea" id="RHEA:13073"/>
        <dbReference type="ChEBI" id="CHEBI:15377"/>
        <dbReference type="ChEBI" id="CHEBI:15378"/>
        <dbReference type="ChEBI" id="CHEBI:43474"/>
        <dbReference type="ChEBI" id="CHEBI:77828"/>
        <dbReference type="ChEBI" id="CHEBI:142410"/>
        <dbReference type="EC" id="3.6.1.40"/>
    </reaction>
</comment>
<comment type="pathway">
    <text evidence="1">Purine metabolism; ppGpp biosynthesis; ppGpp from GTP: step 2/2.</text>
</comment>
<comment type="similarity">
    <text evidence="1">Belongs to the GppA/Ppx family. GppA subfamily.</text>
</comment>
<protein>
    <recommendedName>
        <fullName evidence="1">Guanosine-5'-triphosphate,3'-diphosphate pyrophosphatase</fullName>
        <ecNumber evidence="1">3.6.1.40</ecNumber>
    </recommendedName>
    <alternativeName>
        <fullName evidence="1">Guanosine pentaphosphate phosphohydrolase</fullName>
    </alternativeName>
    <alternativeName>
        <fullName evidence="1">pppGpp-5'-phosphohydrolase</fullName>
    </alternativeName>
</protein>
<name>GPPA_SERP5</name>